<reference key="1">
    <citation type="journal article" date="2014" name="Mol. Microbiol.">
        <title>Functional analysis of the conserved transcriptional regulator CfWor1 in Cladosporium fulvum reveals diverse roles in the virulence of plant pathogenic fungi.</title>
        <authorList>
            <person name="Okmen B."/>
            <person name="Collemare J."/>
            <person name="Griffiths S."/>
            <person name="van der Burgt A."/>
            <person name="Cox R."/>
            <person name="de Wit P.J."/>
        </authorList>
    </citation>
    <scope>INDUCTION</scope>
</reference>
<reference key="2">
    <citation type="journal article" date="2014" name="PLoS ONE">
        <title>Secondary metabolism and biotrophic lifestyle in the tomato pathogen Cladosporium fulvum.</title>
        <authorList>
            <person name="Collemare J."/>
            <person name="Griffiths S."/>
            <person name="Iida Y."/>
            <person name="Karimi Jashni M."/>
            <person name="Battaglia E."/>
            <person name="Cox R.J."/>
            <person name="de Wit P.J."/>
        </authorList>
    </citation>
    <scope>IDENTIFICATION</scope>
    <scope>FUNCTION</scope>
    <scope>DOMAIN</scope>
    <scope>INDUCTION</scope>
</reference>
<reference key="3">
    <citation type="journal article" date="2016" name="Proc. Natl. Acad. Sci. U.S.A.">
        <title>Elucidation of cladofulvin biosynthesis reveals a cytochrome P450 monooxygenase required for anthraquinone dimerization.</title>
        <authorList>
            <person name="Griffiths S."/>
            <person name="Mesarich C.H."/>
            <person name="Saccomanno B."/>
            <person name="Vaisberg A."/>
            <person name="De Wit P.J."/>
            <person name="Cox R."/>
            <person name="Collemare J."/>
        </authorList>
    </citation>
    <scope>INDUCTION</scope>
    <scope>DISRUPTION PHENOTYPE</scope>
    <scope>FUNCTION</scope>
    <scope>CATALYTIC ACTIVITY</scope>
    <scope>PATHWAY</scope>
</reference>
<reference key="4">
    <citation type="journal article" date="2018" name="Mol. Plant Pathol.">
        <title>Down-regulation of cladofulvin biosynthesis is required for biotrophic growth of Cladosporium fulvum on tomato.</title>
        <authorList>
            <person name="Griffiths S."/>
            <person name="Mesarich C.H."/>
            <person name="Overdijk E.J.R."/>
            <person name="Saccomanno B."/>
            <person name="de Wit P.J.G.M."/>
            <person name="Collemare J."/>
        </authorList>
    </citation>
    <scope>FUNCTION</scope>
    <scope>INDUCTION</scope>
    <scope>DISRUPTION PHENOTYPE</scope>
</reference>
<protein>
    <recommendedName>
        <fullName evidence="12">Atrochrysone carboxylic acid synthase</fullName>
        <shortName evidence="1">ACAS</shortName>
        <ecNumber evidence="9">2.3.1.-</ecNumber>
    </recommendedName>
    <alternativeName>
        <fullName evidence="12">Cladofulvin biosynthesis cluster protein G</fullName>
    </alternativeName>
    <alternativeName>
        <fullName evidence="12">Non-reducing polyketide synthase claG</fullName>
    </alternativeName>
</protein>
<organism>
    <name type="scientific">Passalora fulva</name>
    <name type="common">Tomato leaf mold</name>
    <name type="synonym">Cladosporium fulvum</name>
    <dbReference type="NCBI Taxonomy" id="5499"/>
    <lineage>
        <taxon>Eukaryota</taxon>
        <taxon>Fungi</taxon>
        <taxon>Dikarya</taxon>
        <taxon>Ascomycota</taxon>
        <taxon>Pezizomycotina</taxon>
        <taxon>Dothideomycetes</taxon>
        <taxon>Dothideomycetidae</taxon>
        <taxon>Mycosphaerellales</taxon>
        <taxon>Mycosphaerellaceae</taxon>
        <taxon>Fulvia</taxon>
    </lineage>
</organism>
<keyword id="KW-0511">Multifunctional enzyme</keyword>
<keyword id="KW-0596">Phosphopantetheine</keyword>
<keyword id="KW-0597">Phosphoprotein</keyword>
<keyword id="KW-0808">Transferase</keyword>
<evidence type="ECO:0000250" key="1">
    <source>
        <dbReference type="UniProtKB" id="Q5BH30"/>
    </source>
</evidence>
<evidence type="ECO:0000255" key="2"/>
<evidence type="ECO:0000255" key="3">
    <source>
        <dbReference type="PROSITE-ProRule" id="PRU00258"/>
    </source>
</evidence>
<evidence type="ECO:0000255" key="4">
    <source>
        <dbReference type="PROSITE-ProRule" id="PRU01348"/>
    </source>
</evidence>
<evidence type="ECO:0000255" key="5">
    <source>
        <dbReference type="PROSITE-ProRule" id="PRU01363"/>
    </source>
</evidence>
<evidence type="ECO:0000256" key="6">
    <source>
        <dbReference type="SAM" id="MobiDB-lite"/>
    </source>
</evidence>
<evidence type="ECO:0000269" key="7">
    <source>
    </source>
</evidence>
<evidence type="ECO:0000269" key="8">
    <source>
    </source>
</evidence>
<evidence type="ECO:0000269" key="9">
    <source>
    </source>
</evidence>
<evidence type="ECO:0000269" key="10">
    <source>
    </source>
</evidence>
<evidence type="ECO:0000303" key="11">
    <source>
    </source>
</evidence>
<evidence type="ECO:0000303" key="12">
    <source>
    </source>
</evidence>
<evidence type="ECO:0000305" key="13">
    <source>
    </source>
</evidence>
<comment type="function">
    <text evidence="7 9 10">Non-reducing polyketide synthase; part of the gene cluster that mediates the biosynthesis of the bianthraquinone cladofulvin, a conidial pigment not required for virulence but that plays a role in fitness and resistance to environmental stresses including UV light and low-temperature stress (PubMed:24465762, PubMed:27274078, PubMed:27997759). The pathway begins with the synthesis of atrochrysone thioester by the polyketide synthase (PKS) claG. The atrochrysone carboxyl ACP thioesterase claF then breaks the thioester bond and releases the atrochrysone carboxylic acid from claG (PubMed:27274078). This compound is decarboxylated by claH to yield emodin, which is further converted to chrysophanol hydroquinone by the reductase claC and the dehydratase claB (PubMed:27274078). The cytochrome P450 monooxygenase claM then catalyzes the dimerization of nataloe-emodin to cladofulvin (PubMed:27274078).</text>
</comment>
<comment type="catalytic activity">
    <reaction evidence="9">
        <text>holo-[ACP] + 8 malonyl-CoA + 8 H(+) = atrochrysone carboxyl-[ACP] + 8 CO2 + 8 CoA + 2 H2O</text>
        <dbReference type="Rhea" id="RHEA:64232"/>
        <dbReference type="Rhea" id="RHEA-COMP:9685"/>
        <dbReference type="Rhea" id="RHEA-COMP:16552"/>
        <dbReference type="ChEBI" id="CHEBI:15377"/>
        <dbReference type="ChEBI" id="CHEBI:15378"/>
        <dbReference type="ChEBI" id="CHEBI:16526"/>
        <dbReference type="ChEBI" id="CHEBI:57287"/>
        <dbReference type="ChEBI" id="CHEBI:57384"/>
        <dbReference type="ChEBI" id="CHEBI:64479"/>
        <dbReference type="ChEBI" id="CHEBI:149712"/>
    </reaction>
    <physiologicalReaction direction="left-to-right" evidence="9">
        <dbReference type="Rhea" id="RHEA:64233"/>
    </physiologicalReaction>
</comment>
<comment type="pathway">
    <text evidence="9">Pigment biosynthesis.</text>
</comment>
<comment type="induction">
    <text evidence="7 8 9 10">Expression is positively regulated by the transcriptional regulator wor1 (PubMed:24521437, PubMed:27274078). Exhibits high expression at the early stages of infection when runner hyphae were growing on the tomato leaf surface (PubMed:24465762). Expression drops after penetration when the fungus is colonizing the apoplastic space between mesophyll cells (PubMed:24465762, PubMed:27997759). The expression is induced at later stages of infection when conidiophores emerge from the plant and produce conidia (PubMed:24465762).</text>
</comment>
<comment type="domain">
    <text evidence="13">Multidomain protein; including a starter unit:ACP transacylase (SAT) that selects the starter unit; a ketosynthase (KS) that catalyzes repeated decarboxylative condensation to elongate the polyketide backbone; a malonyl-CoA:ACP transacylase (MAT) that selects and transfers the extender unit malonyl-CoA; a product template (PT) domain that controls the immediate cyclization regioselectivity of the reactive polyketide backbone; and an acyl-carrier protein (ACP) that serves as the tether of the growing and completed polyketide via its phosphopantetheinyl arm.</text>
</comment>
<comment type="disruption phenotype">
    <text evidence="9 10">Impairs the production of cladofulvin (PubMed:27274078). Does not affect virulence (PubMed:27997759).</text>
</comment>
<name>CLAG_PASFU</name>
<dbReference type="EC" id="2.3.1.-" evidence="9"/>
<dbReference type="SMR" id="P0CU67"/>
<dbReference type="OMA" id="CKTWDAT"/>
<dbReference type="GO" id="GO:0004315">
    <property type="term" value="F:3-oxoacyl-[acyl-carrier-protein] synthase activity"/>
    <property type="evidence" value="ECO:0007669"/>
    <property type="project" value="InterPro"/>
</dbReference>
<dbReference type="GO" id="GO:0004312">
    <property type="term" value="F:fatty acid synthase activity"/>
    <property type="evidence" value="ECO:0007669"/>
    <property type="project" value="TreeGrafter"/>
</dbReference>
<dbReference type="GO" id="GO:0031177">
    <property type="term" value="F:phosphopantetheine binding"/>
    <property type="evidence" value="ECO:0007669"/>
    <property type="project" value="InterPro"/>
</dbReference>
<dbReference type="GO" id="GO:0006633">
    <property type="term" value="P:fatty acid biosynthetic process"/>
    <property type="evidence" value="ECO:0007669"/>
    <property type="project" value="InterPro"/>
</dbReference>
<dbReference type="GO" id="GO:0044550">
    <property type="term" value="P:secondary metabolite biosynthetic process"/>
    <property type="evidence" value="ECO:0007669"/>
    <property type="project" value="TreeGrafter"/>
</dbReference>
<dbReference type="CDD" id="cd00833">
    <property type="entry name" value="PKS"/>
    <property type="match status" value="1"/>
</dbReference>
<dbReference type="FunFam" id="3.40.366.10:FF:000002">
    <property type="entry name" value="Probable polyketide synthase 2"/>
    <property type="match status" value="1"/>
</dbReference>
<dbReference type="FunFam" id="1.10.1200.10:FF:000011">
    <property type="entry name" value="Sterigmatocystin biosynthesis polyketide synthase"/>
    <property type="match status" value="1"/>
</dbReference>
<dbReference type="FunFam" id="3.10.129.110:FF:000001">
    <property type="entry name" value="Sterigmatocystin biosynthesis polyketide synthase"/>
    <property type="match status" value="1"/>
</dbReference>
<dbReference type="Gene3D" id="3.30.70.3290">
    <property type="match status" value="1"/>
</dbReference>
<dbReference type="Gene3D" id="3.40.47.10">
    <property type="match status" value="1"/>
</dbReference>
<dbReference type="Gene3D" id="1.10.1200.10">
    <property type="entry name" value="ACP-like"/>
    <property type="match status" value="1"/>
</dbReference>
<dbReference type="Gene3D" id="3.40.366.10">
    <property type="entry name" value="Malonyl-Coenzyme A Acyl Carrier Protein, domain 2"/>
    <property type="match status" value="2"/>
</dbReference>
<dbReference type="Gene3D" id="3.10.129.110">
    <property type="entry name" value="Polyketide synthase dehydratase"/>
    <property type="match status" value="1"/>
</dbReference>
<dbReference type="InterPro" id="IPR001227">
    <property type="entry name" value="Ac_transferase_dom_sf"/>
</dbReference>
<dbReference type="InterPro" id="IPR036736">
    <property type="entry name" value="ACP-like_sf"/>
</dbReference>
<dbReference type="InterPro" id="IPR014043">
    <property type="entry name" value="Acyl_transferase_dom"/>
</dbReference>
<dbReference type="InterPro" id="IPR016035">
    <property type="entry name" value="Acyl_Trfase/lysoPLipase"/>
</dbReference>
<dbReference type="InterPro" id="IPR018201">
    <property type="entry name" value="Ketoacyl_synth_AS"/>
</dbReference>
<dbReference type="InterPro" id="IPR014031">
    <property type="entry name" value="Ketoacyl_synth_C"/>
</dbReference>
<dbReference type="InterPro" id="IPR014030">
    <property type="entry name" value="Ketoacyl_synth_N"/>
</dbReference>
<dbReference type="InterPro" id="IPR016036">
    <property type="entry name" value="Malonyl_transacylase_ACP-bd"/>
</dbReference>
<dbReference type="InterPro" id="IPR020841">
    <property type="entry name" value="PKS_Beta-ketoAc_synthase_dom"/>
</dbReference>
<dbReference type="InterPro" id="IPR042104">
    <property type="entry name" value="PKS_dehydratase_sf"/>
</dbReference>
<dbReference type="InterPro" id="IPR049900">
    <property type="entry name" value="PKS_mFAS_DH"/>
</dbReference>
<dbReference type="InterPro" id="IPR050091">
    <property type="entry name" value="PKS_NRPS_Biosynth_Enz"/>
</dbReference>
<dbReference type="InterPro" id="IPR020806">
    <property type="entry name" value="PKS_PP-bd"/>
</dbReference>
<dbReference type="InterPro" id="IPR009081">
    <property type="entry name" value="PP-bd_ACP"/>
</dbReference>
<dbReference type="InterPro" id="IPR030918">
    <property type="entry name" value="PT_fungal_PKS"/>
</dbReference>
<dbReference type="InterPro" id="IPR032088">
    <property type="entry name" value="SAT"/>
</dbReference>
<dbReference type="InterPro" id="IPR016039">
    <property type="entry name" value="Thiolase-like"/>
</dbReference>
<dbReference type="NCBIfam" id="TIGR04532">
    <property type="entry name" value="PT_fungal_PKS"/>
    <property type="match status" value="1"/>
</dbReference>
<dbReference type="PANTHER" id="PTHR43775">
    <property type="entry name" value="FATTY ACID SYNTHASE"/>
    <property type="match status" value="1"/>
</dbReference>
<dbReference type="PANTHER" id="PTHR43775:SF37">
    <property type="entry name" value="SI:DKEY-61P9.11"/>
    <property type="match status" value="1"/>
</dbReference>
<dbReference type="Pfam" id="PF00698">
    <property type="entry name" value="Acyl_transf_1"/>
    <property type="match status" value="1"/>
</dbReference>
<dbReference type="Pfam" id="PF22621">
    <property type="entry name" value="CurL-like_PKS_C"/>
    <property type="match status" value="1"/>
</dbReference>
<dbReference type="Pfam" id="PF00109">
    <property type="entry name" value="ketoacyl-synt"/>
    <property type="match status" value="1"/>
</dbReference>
<dbReference type="Pfam" id="PF02801">
    <property type="entry name" value="Ketoacyl-synt_C"/>
    <property type="match status" value="1"/>
</dbReference>
<dbReference type="Pfam" id="PF00550">
    <property type="entry name" value="PP-binding"/>
    <property type="match status" value="1"/>
</dbReference>
<dbReference type="Pfam" id="PF16073">
    <property type="entry name" value="SAT"/>
    <property type="match status" value="1"/>
</dbReference>
<dbReference type="SMART" id="SM00827">
    <property type="entry name" value="PKS_AT"/>
    <property type="match status" value="1"/>
</dbReference>
<dbReference type="SMART" id="SM00825">
    <property type="entry name" value="PKS_KS"/>
    <property type="match status" value="1"/>
</dbReference>
<dbReference type="SMART" id="SM00823">
    <property type="entry name" value="PKS_PP"/>
    <property type="match status" value="1"/>
</dbReference>
<dbReference type="SUPFAM" id="SSF47336">
    <property type="entry name" value="ACP-like"/>
    <property type="match status" value="1"/>
</dbReference>
<dbReference type="SUPFAM" id="SSF52151">
    <property type="entry name" value="FabD/lysophospholipase-like"/>
    <property type="match status" value="1"/>
</dbReference>
<dbReference type="SUPFAM" id="SSF55048">
    <property type="entry name" value="Probable ACP-binding domain of malonyl-CoA ACP transacylase"/>
    <property type="match status" value="1"/>
</dbReference>
<dbReference type="SUPFAM" id="SSF53901">
    <property type="entry name" value="Thiolase-like"/>
    <property type="match status" value="1"/>
</dbReference>
<dbReference type="PROSITE" id="PS50075">
    <property type="entry name" value="CARRIER"/>
    <property type="match status" value="1"/>
</dbReference>
<dbReference type="PROSITE" id="PS00606">
    <property type="entry name" value="KS3_1"/>
    <property type="match status" value="1"/>
</dbReference>
<dbReference type="PROSITE" id="PS52004">
    <property type="entry name" value="KS3_2"/>
    <property type="match status" value="1"/>
</dbReference>
<dbReference type="PROSITE" id="PS52019">
    <property type="entry name" value="PKS_MFAS_DH"/>
    <property type="match status" value="1"/>
</dbReference>
<accession>P0CU67</accession>
<proteinExistence type="evidence at protein level"/>
<sequence>MTTNHLENKVHAATESLFYFSNEFPKRDLQDLFRQAHTRSKLAQHKCLAQFIQDATQTVKQEIQGLSMKLQHLFKPLESVLTWAEDHELREGALSGAIDGVLLIVAQMTTLIGYLENNTAKMDDIATASLAGLGVGLLTACAVSSASTIADLSATGADAVRTAFRLGVHVYYVSQTLEALDPSARPETWAYVINNVTPTEAQEQLDTLYANSTQPATSKVFISALSRSSVTVSGPPARLKALVTGSEFFRTSRYIALPVYGGLCHAPHVYGQDDVDMVMQSRAFSVQKAPATHLKSVWSTSSGYPYLVEDSKSLFASVVAELLTKAICWDSVVSSIVKYTGLTDASEMIIYNYGNSIPLNELESALKSSPAKLKVVNSNLLSWMGHNSPTSVKPRNTLQSKLAIVGMSCRLPGGATSNELFWDVLRRGVDTSQVIPADRFDVATHYDPAGKQLNKSMTQYGCFIDEPGLFDAPFFNMSPREAQTVDPQMRLALVTAYEALEQAGYVANRTASTRLERIGTYYGQAADDYREVNQGQEVSTYYIPGGCRAFGPGRINYFFKFAGPSYSIDTACSSGLAAVEVACQALWRGDVDTAVTGGVNILTNPDGFTGLCSGHFLSKGHNACKTWDATADGYCRADGVGSLVIKRLEDAEDDNDNILGVILGAGTNHSAQAVSITHPHAGHQAYLARQVLRQAGVDPLDVSYVELHGTGTQAGDSEEMQGILDVYAPLSKRRSQSQPLHIGAVKANMGHSESSAGTTALVKVLLMLQNNVIPPHIGITTEMNPKFGHDFKKRNLHIPFELTPWEHTDDKRRIAVVNNFGAAGGNTTMILEDAPMRSISQSDTRKTHVVVLSAKTKTSLVANVDRLISYIDSHPDTQIANVSYTTTARRYQHVLRVAISTSEIAHLQKQLYSHREKIEYIQPVRKAEPPPVAFSFTGQGASHKSMNLELYRDVPTFREFVHQLDSLTRAQGFESFICALDGSHDKDHQHSPVVTQLALVCSEIALAKYWASIGVLPNIVIGHSLGEYAAMHIAGVISASDAIFLVGRRAQLLQERCKIGSHLMMAVRASVDQITQSAAGKPFTVACVNGPADTVLAGTKEEIEVIKTPLESSGLQCIKLDVAFAFHSEQTDPLLDDFEALAKSGVIFAEPKLPVISPLLGKVIFDAKTINATYVRRATREAVDFLAALNNAQEIGAIGGDTVWVEIGPHPVCTGFVRSTIPSVKLALPSFRRGEENWKTLSDSIAQLYTVGVDIDWTELHRPFEKNLRLLDLPTYAFNEKTYWLQYKGDWCLTKGNTFYADEQKIVRGQLPSVSELHTSTVQQIVEQVFDTDTGSCTVVIESDMMQPDFLAAAHGHRMNDCGVATSSIHGDIAFTLAEHIHKKLGVHGKDTRYNVANLQVTKALVARKNTANPQVIRVTASTTDVRSGIDLVWQNINANGDSAEPFATSSIHAGISTDWISSWSSLTHLVRDRIETLDRLVAEGKANRLSHNMAYTLFASNLVDYADKYRGMQSVVMHGLEGCADVELSTKESGVWTVPPYFIDSVAHLAGFIMNCSDAIDAKKFFCITPGWKTMRFARPLVPGARYQSYVKMIPTVEDDTAYFGDVYILQDGVIIGLVEGIEFHRYRRILLERLFSAPDSTNLDDTTETKDISSSTQHSVPVSRQVPPAAKSSAQTVFESSLPFAVPGPRKSTARPAVDEIAAREKPVASQSSSITNRAMQLIADEVGVELADLCDDVGFSDLGVDSLMSLVIADTFRATLDIKVNGSLFLDYETIGDLRNWLEETYA</sequence>
<gene>
    <name evidence="12" type="primary">claG</name>
    <name evidence="11" type="synonym">pks6</name>
    <name type="ORF">Clafu184395</name>
</gene>
<feature type="chain" id="PRO_0000445887" description="Atrochrysone carboxylic acid synthase">
    <location>
        <begin position="1"/>
        <end position="1790"/>
    </location>
</feature>
<feature type="domain" description="Ketosynthase family 3 (KS3)" evidence="4 13">
    <location>
        <begin position="399"/>
        <end position="833"/>
    </location>
</feature>
<feature type="domain" description="PKS/mFAS DH" evidence="5">
    <location>
        <begin position="1323"/>
        <end position="1634"/>
    </location>
</feature>
<feature type="domain" description="Carrier" evidence="3 13">
    <location>
        <begin position="1715"/>
        <end position="1789"/>
    </location>
</feature>
<feature type="region of interest" description="N-terminal acylcarrier protein transacylase domain (SAT)" evidence="2 13">
    <location>
        <begin position="27"/>
        <end position="265"/>
    </location>
</feature>
<feature type="region of interest" description="Malonyl-CoA:ACP transacylase (MAT) domain" evidence="2 13">
    <location>
        <begin position="934"/>
        <end position="1254"/>
    </location>
</feature>
<feature type="region of interest" description="N-terminal hotdog fold" evidence="5">
    <location>
        <begin position="1323"/>
        <end position="1475"/>
    </location>
</feature>
<feature type="region of interest" description="Product template (PT) domain" evidence="2 13">
    <location>
        <begin position="1357"/>
        <end position="1631"/>
    </location>
</feature>
<feature type="region of interest" description="C-terminal hotdog fold" evidence="5">
    <location>
        <begin position="1487"/>
        <end position="1634"/>
    </location>
</feature>
<feature type="region of interest" description="Disordered" evidence="6">
    <location>
        <begin position="1644"/>
        <end position="1667"/>
    </location>
</feature>
<feature type="compositionally biased region" description="Polar residues" evidence="6">
    <location>
        <begin position="1654"/>
        <end position="1664"/>
    </location>
</feature>
<feature type="active site" description="For beta-ketoacyl synthase activity" evidence="4">
    <location>
        <position position="572"/>
    </location>
</feature>
<feature type="active site" description="For beta-ketoacyl synthase activity" evidence="4">
    <location>
        <position position="708"/>
    </location>
</feature>
<feature type="active site" description="For beta-ketoacyl synthase activity" evidence="4">
    <location>
        <position position="751"/>
    </location>
</feature>
<feature type="active site" description="Proton acceptor; for dehydratase activity" evidence="5">
    <location>
        <position position="1357"/>
    </location>
</feature>
<feature type="active site" description="Proton donor; for dehydratase activity" evidence="5">
    <location>
        <position position="1545"/>
    </location>
</feature>
<feature type="modified residue" description="O-(pantetheine 4'-phosphoryl)serine" evidence="3">
    <location>
        <position position="1749"/>
    </location>
</feature>